<reference key="1">
    <citation type="journal article" date="2000" name="Nature">
        <title>DNA sequence of both chromosomes of the cholera pathogen Vibrio cholerae.</title>
        <authorList>
            <person name="Heidelberg J.F."/>
            <person name="Eisen J.A."/>
            <person name="Nelson W.C."/>
            <person name="Clayton R.A."/>
            <person name="Gwinn M.L."/>
            <person name="Dodson R.J."/>
            <person name="Haft D.H."/>
            <person name="Hickey E.K."/>
            <person name="Peterson J.D."/>
            <person name="Umayam L.A."/>
            <person name="Gill S.R."/>
            <person name="Nelson K.E."/>
            <person name="Read T.D."/>
            <person name="Tettelin H."/>
            <person name="Richardson D.L."/>
            <person name="Ermolaeva M.D."/>
            <person name="Vamathevan J.J."/>
            <person name="Bass S."/>
            <person name="Qin H."/>
            <person name="Dragoi I."/>
            <person name="Sellers P."/>
            <person name="McDonald L.A."/>
            <person name="Utterback T.R."/>
            <person name="Fleischmann R.D."/>
            <person name="Nierman W.C."/>
            <person name="White O."/>
            <person name="Salzberg S.L."/>
            <person name="Smith H.O."/>
            <person name="Colwell R.R."/>
            <person name="Mekalanos J.J."/>
            <person name="Venter J.C."/>
            <person name="Fraser C.M."/>
        </authorList>
    </citation>
    <scope>NUCLEOTIDE SEQUENCE [LARGE SCALE GENOMIC DNA]</scope>
    <source>
        <strain>ATCC 39315 / El Tor Inaba N16961</strain>
    </source>
</reference>
<protein>
    <recommendedName>
        <fullName evidence="1">3-isopropylmalate dehydrogenase</fullName>
        <ecNumber evidence="1">1.1.1.85</ecNumber>
    </recommendedName>
    <alternativeName>
        <fullName evidence="1">3-IPM-DH</fullName>
    </alternativeName>
    <alternativeName>
        <fullName evidence="1">Beta-IPM dehydrogenase</fullName>
        <shortName evidence="1">IMDH</shortName>
    </alternativeName>
</protein>
<keyword id="KW-0028">Amino-acid biosynthesis</keyword>
<keyword id="KW-0100">Branched-chain amino acid biosynthesis</keyword>
<keyword id="KW-0963">Cytoplasm</keyword>
<keyword id="KW-0432">Leucine biosynthesis</keyword>
<keyword id="KW-0460">Magnesium</keyword>
<keyword id="KW-0464">Manganese</keyword>
<keyword id="KW-0479">Metal-binding</keyword>
<keyword id="KW-0520">NAD</keyword>
<keyword id="KW-0560">Oxidoreductase</keyword>
<keyword id="KW-1185">Reference proteome</keyword>
<proteinExistence type="inferred from homology"/>
<evidence type="ECO:0000255" key="1">
    <source>
        <dbReference type="HAMAP-Rule" id="MF_01033"/>
    </source>
</evidence>
<sequence length="363" mass="39405">MTDRDYKIAVLPGDGIGPEVMAQAHKVLDAIEQKHGIRFSREEHDVGGIAIDNHGCPLPESTLRACEEADAVLFGSVGGPKWEHLPPNEQPERGALLPLRKHFQLFCNLRPAQIHQGLEAFSPLRADISARGFDIVVVRELTGGIYFGQPKGREGEGAHEKAFDTEVYHRFEIERIARIAFESARLRRKKVCSIDKANVLQSSILWREVVSEIAKEYPDVSLSHMYIDNATMQLIKDPAQFDVMLCSNIFGDILSDECAMITGSMGMLPSASMNESKFGLYEPAGGSAPDIAGKNIANPVAQILSAALMLRYSLGEEAAARDIENAVSQALAAGELTADLAGSKPALSTSAMGDKIASYILNS</sequence>
<organism>
    <name type="scientific">Vibrio cholerae serotype O1 (strain ATCC 39315 / El Tor Inaba N16961)</name>
    <dbReference type="NCBI Taxonomy" id="243277"/>
    <lineage>
        <taxon>Bacteria</taxon>
        <taxon>Pseudomonadati</taxon>
        <taxon>Pseudomonadota</taxon>
        <taxon>Gammaproteobacteria</taxon>
        <taxon>Vibrionales</taxon>
        <taxon>Vibrionaceae</taxon>
        <taxon>Vibrio</taxon>
    </lineage>
</organism>
<dbReference type="EC" id="1.1.1.85" evidence="1"/>
<dbReference type="EMBL" id="AE003852">
    <property type="protein sequence ID" value="AAF95633.1"/>
    <property type="molecule type" value="Genomic_DNA"/>
</dbReference>
<dbReference type="PIR" id="G82070">
    <property type="entry name" value="G82070"/>
</dbReference>
<dbReference type="RefSeq" id="NP_232120.1">
    <property type="nucleotide sequence ID" value="NC_002505.1"/>
</dbReference>
<dbReference type="RefSeq" id="WP_000132138.1">
    <property type="nucleotide sequence ID" value="NZ_LT906614.1"/>
</dbReference>
<dbReference type="SMR" id="Q9KP82"/>
<dbReference type="STRING" id="243277.VC_2491"/>
<dbReference type="DNASU" id="2615148"/>
<dbReference type="EnsemblBacteria" id="AAF95633">
    <property type="protein sequence ID" value="AAF95633"/>
    <property type="gene ID" value="VC_2491"/>
</dbReference>
<dbReference type="KEGG" id="vch:VC_2491"/>
<dbReference type="PATRIC" id="fig|243277.26.peg.2373"/>
<dbReference type="eggNOG" id="COG0473">
    <property type="taxonomic scope" value="Bacteria"/>
</dbReference>
<dbReference type="HOGENOM" id="CLU_031953_0_3_6"/>
<dbReference type="UniPathway" id="UPA00048">
    <property type="reaction ID" value="UER00072"/>
</dbReference>
<dbReference type="Proteomes" id="UP000000584">
    <property type="component" value="Chromosome 1"/>
</dbReference>
<dbReference type="GO" id="GO:0005829">
    <property type="term" value="C:cytosol"/>
    <property type="evidence" value="ECO:0000318"/>
    <property type="project" value="GO_Central"/>
</dbReference>
<dbReference type="GO" id="GO:0003862">
    <property type="term" value="F:3-isopropylmalate dehydrogenase activity"/>
    <property type="evidence" value="ECO:0000318"/>
    <property type="project" value="GO_Central"/>
</dbReference>
<dbReference type="GO" id="GO:0000287">
    <property type="term" value="F:magnesium ion binding"/>
    <property type="evidence" value="ECO:0007669"/>
    <property type="project" value="InterPro"/>
</dbReference>
<dbReference type="GO" id="GO:0051287">
    <property type="term" value="F:NAD binding"/>
    <property type="evidence" value="ECO:0007669"/>
    <property type="project" value="InterPro"/>
</dbReference>
<dbReference type="GO" id="GO:0009098">
    <property type="term" value="P:L-leucine biosynthetic process"/>
    <property type="evidence" value="ECO:0000318"/>
    <property type="project" value="GO_Central"/>
</dbReference>
<dbReference type="FunFam" id="3.40.718.10:FF:000004">
    <property type="entry name" value="3-isopropylmalate dehydrogenase"/>
    <property type="match status" value="1"/>
</dbReference>
<dbReference type="Gene3D" id="3.40.718.10">
    <property type="entry name" value="Isopropylmalate Dehydrogenase"/>
    <property type="match status" value="1"/>
</dbReference>
<dbReference type="HAMAP" id="MF_01033">
    <property type="entry name" value="LeuB_type1"/>
    <property type="match status" value="1"/>
</dbReference>
<dbReference type="InterPro" id="IPR019818">
    <property type="entry name" value="IsoCit/isopropylmalate_DH_CS"/>
</dbReference>
<dbReference type="InterPro" id="IPR024084">
    <property type="entry name" value="IsoPropMal-DH-like_dom"/>
</dbReference>
<dbReference type="InterPro" id="IPR004429">
    <property type="entry name" value="Isopropylmalate_DH"/>
</dbReference>
<dbReference type="NCBIfam" id="TIGR00169">
    <property type="entry name" value="leuB"/>
    <property type="match status" value="1"/>
</dbReference>
<dbReference type="PANTHER" id="PTHR42979">
    <property type="entry name" value="3-ISOPROPYLMALATE DEHYDROGENASE"/>
    <property type="match status" value="1"/>
</dbReference>
<dbReference type="PANTHER" id="PTHR42979:SF1">
    <property type="entry name" value="3-ISOPROPYLMALATE DEHYDROGENASE"/>
    <property type="match status" value="1"/>
</dbReference>
<dbReference type="Pfam" id="PF00180">
    <property type="entry name" value="Iso_dh"/>
    <property type="match status" value="1"/>
</dbReference>
<dbReference type="SMART" id="SM01329">
    <property type="entry name" value="Iso_dh"/>
    <property type="match status" value="1"/>
</dbReference>
<dbReference type="SUPFAM" id="SSF53659">
    <property type="entry name" value="Isocitrate/Isopropylmalate dehydrogenase-like"/>
    <property type="match status" value="1"/>
</dbReference>
<dbReference type="PROSITE" id="PS00470">
    <property type="entry name" value="IDH_IMDH"/>
    <property type="match status" value="1"/>
</dbReference>
<accession>Q9KP82</accession>
<gene>
    <name evidence="1" type="primary">leuB</name>
    <name type="ordered locus">VC_2491</name>
</gene>
<feature type="chain" id="PRO_0000083778" description="3-isopropylmalate dehydrogenase">
    <location>
        <begin position="1"/>
        <end position="363"/>
    </location>
</feature>
<feature type="binding site" evidence="1">
    <location>
        <begin position="79"/>
        <end position="92"/>
    </location>
    <ligand>
        <name>NAD(+)</name>
        <dbReference type="ChEBI" id="CHEBI:57540"/>
    </ligand>
</feature>
<feature type="binding site" evidence="1">
    <location>
        <position position="100"/>
    </location>
    <ligand>
        <name>substrate</name>
    </ligand>
</feature>
<feature type="binding site" evidence="1">
    <location>
        <position position="110"/>
    </location>
    <ligand>
        <name>substrate</name>
    </ligand>
</feature>
<feature type="binding site" evidence="1">
    <location>
        <position position="139"/>
    </location>
    <ligand>
        <name>substrate</name>
    </ligand>
</feature>
<feature type="binding site" evidence="1">
    <location>
        <position position="228"/>
    </location>
    <ligand>
        <name>Mg(2+)</name>
        <dbReference type="ChEBI" id="CHEBI:18420"/>
    </ligand>
</feature>
<feature type="binding site" evidence="1">
    <location>
        <position position="228"/>
    </location>
    <ligand>
        <name>substrate</name>
    </ligand>
</feature>
<feature type="binding site" evidence="1">
    <location>
        <position position="252"/>
    </location>
    <ligand>
        <name>Mg(2+)</name>
        <dbReference type="ChEBI" id="CHEBI:18420"/>
    </ligand>
</feature>
<feature type="binding site" evidence="1">
    <location>
        <position position="256"/>
    </location>
    <ligand>
        <name>Mg(2+)</name>
        <dbReference type="ChEBI" id="CHEBI:18420"/>
    </ligand>
</feature>
<feature type="binding site" evidence="1">
    <location>
        <begin position="286"/>
        <end position="298"/>
    </location>
    <ligand>
        <name>NAD(+)</name>
        <dbReference type="ChEBI" id="CHEBI:57540"/>
    </ligand>
</feature>
<feature type="site" description="Important for catalysis" evidence="1">
    <location>
        <position position="146"/>
    </location>
</feature>
<feature type="site" description="Important for catalysis" evidence="1">
    <location>
        <position position="196"/>
    </location>
</feature>
<comment type="function">
    <text evidence="1">Catalyzes the oxidation of 3-carboxy-2-hydroxy-4-methylpentanoate (3-isopropylmalate) to 3-carboxy-4-methyl-2-oxopentanoate. The product decarboxylates to 4-methyl-2 oxopentanoate.</text>
</comment>
<comment type="catalytic activity">
    <reaction evidence="1">
        <text>(2R,3S)-3-isopropylmalate + NAD(+) = 4-methyl-2-oxopentanoate + CO2 + NADH</text>
        <dbReference type="Rhea" id="RHEA:32271"/>
        <dbReference type="ChEBI" id="CHEBI:16526"/>
        <dbReference type="ChEBI" id="CHEBI:17865"/>
        <dbReference type="ChEBI" id="CHEBI:35121"/>
        <dbReference type="ChEBI" id="CHEBI:57540"/>
        <dbReference type="ChEBI" id="CHEBI:57945"/>
        <dbReference type="EC" id="1.1.1.85"/>
    </reaction>
</comment>
<comment type="cofactor">
    <cofactor evidence="1">
        <name>Mg(2+)</name>
        <dbReference type="ChEBI" id="CHEBI:18420"/>
    </cofactor>
    <cofactor evidence="1">
        <name>Mn(2+)</name>
        <dbReference type="ChEBI" id="CHEBI:29035"/>
    </cofactor>
    <text evidence="1">Binds 1 Mg(2+) or Mn(2+) ion per subunit.</text>
</comment>
<comment type="pathway">
    <text evidence="1">Amino-acid biosynthesis; L-leucine biosynthesis; L-leucine from 3-methyl-2-oxobutanoate: step 3/4.</text>
</comment>
<comment type="subunit">
    <text evidence="1">Homodimer.</text>
</comment>
<comment type="subcellular location">
    <subcellularLocation>
        <location evidence="1">Cytoplasm</location>
    </subcellularLocation>
</comment>
<comment type="similarity">
    <text evidence="1">Belongs to the isocitrate and isopropylmalate dehydrogenases family. LeuB type 1 subfamily.</text>
</comment>
<name>LEU3_VIBCH</name>